<accession>P51953</accession>
<feature type="chain" id="PRO_0000085794" description="Cyclin-dependent kinase 7">
    <location>
        <begin position="1"/>
        <end position="344"/>
    </location>
</feature>
<feature type="domain" description="Protein kinase" evidence="3">
    <location>
        <begin position="12"/>
        <end position="294"/>
    </location>
</feature>
<feature type="active site" description="Proton acceptor" evidence="3 4">
    <location>
        <position position="136"/>
    </location>
</feature>
<feature type="binding site" evidence="3">
    <location>
        <begin position="18"/>
        <end position="26"/>
    </location>
    <ligand>
        <name>ATP</name>
        <dbReference type="ChEBI" id="CHEBI:30616"/>
    </ligand>
</feature>
<feature type="binding site" evidence="3">
    <location>
        <position position="41"/>
    </location>
    <ligand>
        <name>ATP</name>
        <dbReference type="ChEBI" id="CHEBI:30616"/>
    </ligand>
</feature>
<feature type="modified residue" description="Phosphoserine; by CDK1 and CDK2" evidence="1">
    <location>
        <position position="163"/>
    </location>
</feature>
<feature type="modified residue" description="Phosphothreonine; by CDK2" evidence="1">
    <location>
        <position position="169"/>
    </location>
</feature>
<reference key="1">
    <citation type="journal article" date="1993" name="Biomed. Res.">
        <title>A fish homolog of the cdc2-related protein p40 MO15: its cDNA cloning and expression in oocytes.</title>
        <authorList>
            <person name="Onoe S."/>
            <person name="Yamashita M."/>
            <person name="Kajiura H."/>
            <person name="Katsu Y."/>
            <person name="Jianquao J."/>
            <person name="Nagahama Y."/>
        </authorList>
    </citation>
    <scope>NUCLEOTIDE SEQUENCE [MRNA]</scope>
    <source>
        <tissue>Oocyte</tissue>
    </source>
</reference>
<protein>
    <recommendedName>
        <fullName>Cyclin-dependent kinase 7</fullName>
        <ecNumber>2.7.11.22</ecNumber>
        <ecNumber>2.7.11.23</ecNumber>
    </recommendedName>
    <alternativeName>
        <fullName>40 kDa protein kinase</fullName>
    </alternativeName>
    <alternativeName>
        <fullName>CDC2/CDK2,4-activating kinase</fullName>
    </alternativeName>
    <alternativeName>
        <fullName>Cell division protein kinase 7</fullName>
    </alternativeName>
    <alternativeName>
        <fullName>P40 MO15</fullName>
    </alternativeName>
</protein>
<name>CDK7_CARAU</name>
<proteinExistence type="evidence at transcript level"/>
<organism>
    <name type="scientific">Carassius auratus</name>
    <name type="common">Goldfish</name>
    <dbReference type="NCBI Taxonomy" id="7957"/>
    <lineage>
        <taxon>Eukaryota</taxon>
        <taxon>Metazoa</taxon>
        <taxon>Chordata</taxon>
        <taxon>Craniata</taxon>
        <taxon>Vertebrata</taxon>
        <taxon>Euteleostomi</taxon>
        <taxon>Actinopterygii</taxon>
        <taxon>Neopterygii</taxon>
        <taxon>Teleostei</taxon>
        <taxon>Ostariophysi</taxon>
        <taxon>Cypriniformes</taxon>
        <taxon>Cyprinidae</taxon>
        <taxon>Cyprininae</taxon>
        <taxon>Carassius</taxon>
    </lineage>
</organism>
<dbReference type="EC" id="2.7.11.22"/>
<dbReference type="EC" id="2.7.11.23"/>
<dbReference type="EMBL" id="D38631">
    <property type="protein sequence ID" value="BAA07611.1"/>
    <property type="molecule type" value="mRNA"/>
</dbReference>
<dbReference type="SMR" id="P51953"/>
<dbReference type="Proteomes" id="UP000515129">
    <property type="component" value="Unplaced"/>
</dbReference>
<dbReference type="GO" id="GO:0005737">
    <property type="term" value="C:cytoplasm"/>
    <property type="evidence" value="ECO:0007669"/>
    <property type="project" value="TreeGrafter"/>
</dbReference>
<dbReference type="GO" id="GO:0070985">
    <property type="term" value="C:transcription factor TFIIK complex"/>
    <property type="evidence" value="ECO:0007669"/>
    <property type="project" value="InterPro"/>
</dbReference>
<dbReference type="GO" id="GO:0005524">
    <property type="term" value="F:ATP binding"/>
    <property type="evidence" value="ECO:0007669"/>
    <property type="project" value="UniProtKB-KW"/>
</dbReference>
<dbReference type="GO" id="GO:0004693">
    <property type="term" value="F:cyclin-dependent protein serine/threonine kinase activity"/>
    <property type="evidence" value="ECO:0007669"/>
    <property type="project" value="UniProtKB-EC"/>
</dbReference>
<dbReference type="GO" id="GO:0106310">
    <property type="term" value="F:protein serine kinase activity"/>
    <property type="evidence" value="ECO:0007669"/>
    <property type="project" value="RHEA"/>
</dbReference>
<dbReference type="GO" id="GO:0140836">
    <property type="term" value="F:RNA polymerase II CTD heptapeptide repeat S5 kinase activity"/>
    <property type="evidence" value="ECO:0000250"/>
    <property type="project" value="UniProtKB"/>
</dbReference>
<dbReference type="GO" id="GO:0051301">
    <property type="term" value="P:cell division"/>
    <property type="evidence" value="ECO:0007669"/>
    <property type="project" value="UniProtKB-KW"/>
</dbReference>
<dbReference type="GO" id="GO:0051321">
    <property type="term" value="P:meiotic cell cycle"/>
    <property type="evidence" value="ECO:0007669"/>
    <property type="project" value="UniProtKB-KW"/>
</dbReference>
<dbReference type="GO" id="GO:0045944">
    <property type="term" value="P:positive regulation of transcription by RNA polymerase II"/>
    <property type="evidence" value="ECO:0007669"/>
    <property type="project" value="TreeGrafter"/>
</dbReference>
<dbReference type="GO" id="GO:0006367">
    <property type="term" value="P:transcription initiation at RNA polymerase II promoter"/>
    <property type="evidence" value="ECO:0000250"/>
    <property type="project" value="UniProtKB"/>
</dbReference>
<dbReference type="CDD" id="cd07841">
    <property type="entry name" value="STKc_CDK7"/>
    <property type="match status" value="1"/>
</dbReference>
<dbReference type="FunFam" id="1.10.510.10:FF:000097">
    <property type="entry name" value="Putative cyclin-dependent kinase 7"/>
    <property type="match status" value="1"/>
</dbReference>
<dbReference type="FunFam" id="3.30.200.20:FF:000190">
    <property type="entry name" value="Putative cyclin-dependent kinase 7"/>
    <property type="match status" value="1"/>
</dbReference>
<dbReference type="Gene3D" id="3.30.200.20">
    <property type="entry name" value="Phosphorylase Kinase, domain 1"/>
    <property type="match status" value="1"/>
</dbReference>
<dbReference type="Gene3D" id="1.10.510.10">
    <property type="entry name" value="Transferase(Phosphotransferase) domain 1"/>
    <property type="match status" value="1"/>
</dbReference>
<dbReference type="InterPro" id="IPR050108">
    <property type="entry name" value="CDK"/>
</dbReference>
<dbReference type="InterPro" id="IPR037770">
    <property type="entry name" value="CDK7"/>
</dbReference>
<dbReference type="InterPro" id="IPR011009">
    <property type="entry name" value="Kinase-like_dom_sf"/>
</dbReference>
<dbReference type="InterPro" id="IPR000719">
    <property type="entry name" value="Prot_kinase_dom"/>
</dbReference>
<dbReference type="InterPro" id="IPR017441">
    <property type="entry name" value="Protein_kinase_ATP_BS"/>
</dbReference>
<dbReference type="InterPro" id="IPR008271">
    <property type="entry name" value="Ser/Thr_kinase_AS"/>
</dbReference>
<dbReference type="PANTHER" id="PTHR24056">
    <property type="entry name" value="CELL DIVISION PROTEIN KINASE"/>
    <property type="match status" value="1"/>
</dbReference>
<dbReference type="PANTHER" id="PTHR24056:SF0">
    <property type="entry name" value="CYCLIN-DEPENDENT KINASE 7"/>
    <property type="match status" value="1"/>
</dbReference>
<dbReference type="Pfam" id="PF00069">
    <property type="entry name" value="Pkinase"/>
    <property type="match status" value="1"/>
</dbReference>
<dbReference type="SMART" id="SM00220">
    <property type="entry name" value="S_TKc"/>
    <property type="match status" value="1"/>
</dbReference>
<dbReference type="SUPFAM" id="SSF56112">
    <property type="entry name" value="Protein kinase-like (PK-like)"/>
    <property type="match status" value="1"/>
</dbReference>
<dbReference type="PROSITE" id="PS00107">
    <property type="entry name" value="PROTEIN_KINASE_ATP"/>
    <property type="match status" value="1"/>
</dbReference>
<dbReference type="PROSITE" id="PS50011">
    <property type="entry name" value="PROTEIN_KINASE_DOM"/>
    <property type="match status" value="1"/>
</dbReference>
<dbReference type="PROSITE" id="PS00108">
    <property type="entry name" value="PROTEIN_KINASE_ST"/>
    <property type="match status" value="1"/>
</dbReference>
<comment type="function">
    <text evidence="2">Serine/threonine kinase involved in cell cycle control and in RNA polymerase II-mediated RNA transcription. Cyclin-dependent kinases (CDKs) are activated by the binding to a cyclin and mediate the progression through the cell cycle. Each different complex controls a specific transition between 2 subsequent phases in the cell cycle. Required for both activation and complex formation of cdk1/cyclin-B during G2-M transition, and for activation of cdk2/cyclins during G1-S transition (but not complex formation). cdk7 is the catalytic subunit of the CDK-activating kinase (CAK) complex. CAK activates the cyclin-associated kinases cdk1, cdk2, cdk4 and cdk6 by threonine phosphorylation, thus regulating cell cycle progression. Initiates transcription by RNA polymerase II by mediating phosphorylation of polr2a at 'Ser-5' of the repetitive C-terminal domain (CTD) when polr2a is in complex with DNA, promoting dissociation from DNA and initiation. CAK complexed to the core-TFIIH basal transcription factor activates RNA polymerase II by serine phosphorylation of the CTD of polr2a, allowing its escape from the promoter and elongation of the transcripts.</text>
</comment>
<comment type="catalytic activity">
    <reaction evidence="2">
        <text>L-seryl-[protein] + ATP = O-phospho-L-seryl-[protein] + ADP + H(+)</text>
        <dbReference type="Rhea" id="RHEA:17989"/>
        <dbReference type="Rhea" id="RHEA-COMP:9863"/>
        <dbReference type="Rhea" id="RHEA-COMP:11604"/>
        <dbReference type="ChEBI" id="CHEBI:15378"/>
        <dbReference type="ChEBI" id="CHEBI:29999"/>
        <dbReference type="ChEBI" id="CHEBI:30616"/>
        <dbReference type="ChEBI" id="CHEBI:83421"/>
        <dbReference type="ChEBI" id="CHEBI:456216"/>
        <dbReference type="EC" id="2.7.11.22"/>
    </reaction>
</comment>
<comment type="catalytic activity">
    <reaction evidence="2">
        <text>L-threonyl-[protein] + ATP = O-phospho-L-threonyl-[protein] + ADP + H(+)</text>
        <dbReference type="Rhea" id="RHEA:46608"/>
        <dbReference type="Rhea" id="RHEA-COMP:11060"/>
        <dbReference type="Rhea" id="RHEA-COMP:11605"/>
        <dbReference type="ChEBI" id="CHEBI:15378"/>
        <dbReference type="ChEBI" id="CHEBI:30013"/>
        <dbReference type="ChEBI" id="CHEBI:30616"/>
        <dbReference type="ChEBI" id="CHEBI:61977"/>
        <dbReference type="ChEBI" id="CHEBI:456216"/>
        <dbReference type="EC" id="2.7.11.22"/>
    </reaction>
</comment>
<comment type="catalytic activity">
    <reaction evidence="2">
        <text>[DNA-directed RNA polymerase] + ATP = phospho-[DNA-directed RNA polymerase] + ADP + H(+)</text>
        <dbReference type="Rhea" id="RHEA:10216"/>
        <dbReference type="Rhea" id="RHEA-COMP:11321"/>
        <dbReference type="Rhea" id="RHEA-COMP:11322"/>
        <dbReference type="ChEBI" id="CHEBI:15378"/>
        <dbReference type="ChEBI" id="CHEBI:30616"/>
        <dbReference type="ChEBI" id="CHEBI:43176"/>
        <dbReference type="ChEBI" id="CHEBI:68546"/>
        <dbReference type="ChEBI" id="CHEBI:456216"/>
        <dbReference type="EC" id="2.7.11.23"/>
    </reaction>
</comment>
<comment type="activity regulation">
    <text>Phosphorylation at Thr-169 is required for enzymatic activity.</text>
</comment>
<comment type="subunit">
    <text evidence="1">Probably associates with cyclin-H (ccnh) and mat1 to form a multimeric active enzyme.</text>
</comment>
<comment type="subcellular location">
    <subcellularLocation>
        <location evidence="1">Nucleus</location>
    </subcellularLocation>
</comment>
<comment type="PTM">
    <text evidence="1">Phosphorylation of Ser-163 during mitosis inactivates the enzyme. Phosphorylation of Thr-169 is required for activity. Phosphorylated at Ser-163 and Thr-169 by CDK2 (By similarity).</text>
</comment>
<comment type="similarity">
    <text evidence="5">Belongs to the protein kinase superfamily. CMGC Ser/Thr protein kinase family. CDC2/CDKX subfamily.</text>
</comment>
<evidence type="ECO:0000250" key="1"/>
<evidence type="ECO:0000250" key="2">
    <source>
        <dbReference type="UniProtKB" id="P50613"/>
    </source>
</evidence>
<evidence type="ECO:0000255" key="3">
    <source>
        <dbReference type="PROSITE-ProRule" id="PRU00159"/>
    </source>
</evidence>
<evidence type="ECO:0000255" key="4">
    <source>
        <dbReference type="PROSITE-ProRule" id="PRU10027"/>
    </source>
</evidence>
<evidence type="ECO:0000305" key="5"/>
<sequence>MALDVKSRAKLYEKLDFLGEGQFATVYKARDKTTNTIVAIKKIKVGHRTEAKDGINRTALREIKLLQELSHPNIIGLLDAFGHKSNISLLCFMETDLEVIIKDTSLVLTPANIKAYILMSLQGLEYMHNHWILHRDLKPNNLLLDENGVLKLADFGLAKAFGSPNRVYTHQVVTRWYRAPELLFGARMYGVGVDMWAVGSILAELLLRVPFLAGDSDLDQLTGIFEALGTPTEETWPGMSNLPDYVSFKLFPGTPLEHIFSAAGDDLLELLKGLFTFNPCTRTTASQALKMRYFSIRPGPTPGPQLPRPNSSTEALKEKENLLIGIKRKRDSIEQGTLKKKLVF</sequence>
<keyword id="KW-0067">ATP-binding</keyword>
<keyword id="KW-0131">Cell cycle</keyword>
<keyword id="KW-0132">Cell division</keyword>
<keyword id="KW-0418">Kinase</keyword>
<keyword id="KW-0469">Meiosis</keyword>
<keyword id="KW-0547">Nucleotide-binding</keyword>
<keyword id="KW-0539">Nucleus</keyword>
<keyword id="KW-0597">Phosphoprotein</keyword>
<keyword id="KW-1185">Reference proteome</keyword>
<keyword id="KW-0723">Serine/threonine-protein kinase</keyword>
<keyword id="KW-0808">Transferase</keyword>
<gene>
    <name type="primary">cdk7</name>
    <name type="synonym">mo15</name>
</gene>